<sequence>MPVITLPDGSQRSFDKPVSVYEVAASIGPGLAKATLGGRVNGQRVDAHDLISEDANLVIFTPKDDDGLEIIRHSCAHLLGHAIKQLYPDVKMAIGPTIDNGFYYDVDLEHKLTDEDIAALEARMLELAKTEYDVVKKKVSWQEAHAVFAARGESYKLEILERDIPQSDQPGLYHHEEYIDMCRGPHVPNMRFCLNFKLMRVSGAYWRGDSNNKMLQRIYGTAFADAKQLKAYLNLLEEAAKRDHRKLAKKFDLFHLQDEAPGMVFWHPKGWTLWQQIEQYMRAKQNDWGYQEVRTPLIMDRVLWEKSGHWENYRENMFTTESEKRDFAVKPMNCPGHVQIFNHGLRSHKDLPLRLAEFGSCHRNEASGALHGIMRVRGFVQDDAHIFCTEDQVVAEVAAFNQMLKSVYDDFGFTDIAVKLSLRPEKYAGSLETWNKAEEGLRTALRAAGLEWEELPGEGAFYGPKIEYQIKDALGRSWQCGTIQLDYVLPERLDAEYVADDNVRKRPVMLHRAILGSFERFLGILIEHYEGSFPVWLSPVQVVVANITDSQAEYVKRVEKALREQGIRVIADLRNEKIGFKIREHTIQRVPYLLVVGDKEVENQSLAVRTRDGKDLGVMPLDAFIAHLTADIARRGRVFSAE</sequence>
<proteinExistence type="inferred from homology"/>
<evidence type="ECO:0000255" key="1">
    <source>
        <dbReference type="HAMAP-Rule" id="MF_00184"/>
    </source>
</evidence>
<evidence type="ECO:0000255" key="2">
    <source>
        <dbReference type="PROSITE-ProRule" id="PRU01228"/>
    </source>
</evidence>
<accession>B3PL16</accession>
<reference key="1">
    <citation type="journal article" date="2008" name="J. Bacteriol.">
        <title>Insights into plant cell wall degradation from the genome sequence of the soil bacterium Cellvibrio japonicus.</title>
        <authorList>
            <person name="DeBoy R.T."/>
            <person name="Mongodin E.F."/>
            <person name="Fouts D.E."/>
            <person name="Tailford L.E."/>
            <person name="Khouri H."/>
            <person name="Emerson J.B."/>
            <person name="Mohamoud Y."/>
            <person name="Watkins K."/>
            <person name="Henrissat B."/>
            <person name="Gilbert H.J."/>
            <person name="Nelson K.E."/>
        </authorList>
    </citation>
    <scope>NUCLEOTIDE SEQUENCE [LARGE SCALE GENOMIC DNA]</scope>
    <source>
        <strain>Ueda107</strain>
    </source>
</reference>
<organism>
    <name type="scientific">Cellvibrio japonicus (strain Ueda107)</name>
    <name type="common">Pseudomonas fluorescens subsp. cellulosa</name>
    <dbReference type="NCBI Taxonomy" id="498211"/>
    <lineage>
        <taxon>Bacteria</taxon>
        <taxon>Pseudomonadati</taxon>
        <taxon>Pseudomonadota</taxon>
        <taxon>Gammaproteobacteria</taxon>
        <taxon>Cellvibrionales</taxon>
        <taxon>Cellvibrionaceae</taxon>
        <taxon>Cellvibrio</taxon>
    </lineage>
</organism>
<dbReference type="EC" id="6.1.1.3" evidence="1"/>
<dbReference type="EMBL" id="CP000934">
    <property type="protein sequence ID" value="ACE83885.1"/>
    <property type="molecule type" value="Genomic_DNA"/>
</dbReference>
<dbReference type="RefSeq" id="WP_012488126.1">
    <property type="nucleotide sequence ID" value="NC_010995.1"/>
</dbReference>
<dbReference type="SMR" id="B3PL16"/>
<dbReference type="STRING" id="498211.CJA_2530"/>
<dbReference type="KEGG" id="cja:CJA_2530"/>
<dbReference type="eggNOG" id="COG0441">
    <property type="taxonomic scope" value="Bacteria"/>
</dbReference>
<dbReference type="HOGENOM" id="CLU_008554_0_1_6"/>
<dbReference type="OrthoDB" id="9802304at2"/>
<dbReference type="Proteomes" id="UP000001036">
    <property type="component" value="Chromosome"/>
</dbReference>
<dbReference type="GO" id="GO:0005829">
    <property type="term" value="C:cytosol"/>
    <property type="evidence" value="ECO:0007669"/>
    <property type="project" value="TreeGrafter"/>
</dbReference>
<dbReference type="GO" id="GO:0005524">
    <property type="term" value="F:ATP binding"/>
    <property type="evidence" value="ECO:0007669"/>
    <property type="project" value="UniProtKB-UniRule"/>
</dbReference>
<dbReference type="GO" id="GO:0046872">
    <property type="term" value="F:metal ion binding"/>
    <property type="evidence" value="ECO:0007669"/>
    <property type="project" value="UniProtKB-KW"/>
</dbReference>
<dbReference type="GO" id="GO:0004829">
    <property type="term" value="F:threonine-tRNA ligase activity"/>
    <property type="evidence" value="ECO:0007669"/>
    <property type="project" value="UniProtKB-UniRule"/>
</dbReference>
<dbReference type="GO" id="GO:0000049">
    <property type="term" value="F:tRNA binding"/>
    <property type="evidence" value="ECO:0007669"/>
    <property type="project" value="UniProtKB-KW"/>
</dbReference>
<dbReference type="GO" id="GO:0006435">
    <property type="term" value="P:threonyl-tRNA aminoacylation"/>
    <property type="evidence" value="ECO:0007669"/>
    <property type="project" value="UniProtKB-UniRule"/>
</dbReference>
<dbReference type="CDD" id="cd01667">
    <property type="entry name" value="TGS_ThrRS"/>
    <property type="match status" value="1"/>
</dbReference>
<dbReference type="CDD" id="cd00860">
    <property type="entry name" value="ThrRS_anticodon"/>
    <property type="match status" value="1"/>
</dbReference>
<dbReference type="CDD" id="cd00771">
    <property type="entry name" value="ThrRS_core"/>
    <property type="match status" value="1"/>
</dbReference>
<dbReference type="FunFam" id="3.10.20.30:FF:000005">
    <property type="entry name" value="Threonine--tRNA ligase"/>
    <property type="match status" value="1"/>
</dbReference>
<dbReference type="FunFam" id="3.30.54.20:FF:000002">
    <property type="entry name" value="Threonine--tRNA ligase"/>
    <property type="match status" value="1"/>
</dbReference>
<dbReference type="FunFam" id="3.30.930.10:FF:000002">
    <property type="entry name" value="Threonine--tRNA ligase"/>
    <property type="match status" value="1"/>
</dbReference>
<dbReference type="FunFam" id="3.40.50.800:FF:000001">
    <property type="entry name" value="Threonine--tRNA ligase"/>
    <property type="match status" value="1"/>
</dbReference>
<dbReference type="FunFam" id="3.30.980.10:FF:000005">
    <property type="entry name" value="Threonyl-tRNA synthetase, mitochondrial"/>
    <property type="match status" value="1"/>
</dbReference>
<dbReference type="Gene3D" id="3.10.20.30">
    <property type="match status" value="1"/>
</dbReference>
<dbReference type="Gene3D" id="3.30.54.20">
    <property type="match status" value="1"/>
</dbReference>
<dbReference type="Gene3D" id="3.40.50.800">
    <property type="entry name" value="Anticodon-binding domain"/>
    <property type="match status" value="1"/>
</dbReference>
<dbReference type="Gene3D" id="3.30.930.10">
    <property type="entry name" value="Bira Bifunctional Protein, Domain 2"/>
    <property type="match status" value="1"/>
</dbReference>
<dbReference type="Gene3D" id="3.30.980.10">
    <property type="entry name" value="Threonyl-trna Synthetase, Chain A, domain 2"/>
    <property type="match status" value="1"/>
</dbReference>
<dbReference type="HAMAP" id="MF_00184">
    <property type="entry name" value="Thr_tRNA_synth"/>
    <property type="match status" value="1"/>
</dbReference>
<dbReference type="InterPro" id="IPR002314">
    <property type="entry name" value="aa-tRNA-synt_IIb"/>
</dbReference>
<dbReference type="InterPro" id="IPR006195">
    <property type="entry name" value="aa-tRNA-synth_II"/>
</dbReference>
<dbReference type="InterPro" id="IPR045864">
    <property type="entry name" value="aa-tRNA-synth_II/BPL/LPL"/>
</dbReference>
<dbReference type="InterPro" id="IPR004154">
    <property type="entry name" value="Anticodon-bd"/>
</dbReference>
<dbReference type="InterPro" id="IPR036621">
    <property type="entry name" value="Anticodon-bd_dom_sf"/>
</dbReference>
<dbReference type="InterPro" id="IPR012675">
    <property type="entry name" value="Beta-grasp_dom_sf"/>
</dbReference>
<dbReference type="InterPro" id="IPR004095">
    <property type="entry name" value="TGS"/>
</dbReference>
<dbReference type="InterPro" id="IPR012676">
    <property type="entry name" value="TGS-like"/>
</dbReference>
<dbReference type="InterPro" id="IPR002320">
    <property type="entry name" value="Thr-tRNA-ligase_IIa"/>
</dbReference>
<dbReference type="InterPro" id="IPR018163">
    <property type="entry name" value="Thr/Ala-tRNA-synth_IIc_edit"/>
</dbReference>
<dbReference type="InterPro" id="IPR047246">
    <property type="entry name" value="ThrRS_anticodon"/>
</dbReference>
<dbReference type="InterPro" id="IPR033728">
    <property type="entry name" value="ThrRS_core"/>
</dbReference>
<dbReference type="InterPro" id="IPR012947">
    <property type="entry name" value="tRNA_SAD"/>
</dbReference>
<dbReference type="NCBIfam" id="TIGR00418">
    <property type="entry name" value="thrS"/>
    <property type="match status" value="1"/>
</dbReference>
<dbReference type="PANTHER" id="PTHR11451:SF44">
    <property type="entry name" value="THREONINE--TRNA LIGASE, CHLOROPLASTIC_MITOCHONDRIAL 2"/>
    <property type="match status" value="1"/>
</dbReference>
<dbReference type="PANTHER" id="PTHR11451">
    <property type="entry name" value="THREONINE-TRNA LIGASE"/>
    <property type="match status" value="1"/>
</dbReference>
<dbReference type="Pfam" id="PF03129">
    <property type="entry name" value="HGTP_anticodon"/>
    <property type="match status" value="1"/>
</dbReference>
<dbReference type="Pfam" id="PF02824">
    <property type="entry name" value="TGS"/>
    <property type="match status" value="1"/>
</dbReference>
<dbReference type="Pfam" id="PF00587">
    <property type="entry name" value="tRNA-synt_2b"/>
    <property type="match status" value="1"/>
</dbReference>
<dbReference type="Pfam" id="PF07973">
    <property type="entry name" value="tRNA_SAD"/>
    <property type="match status" value="1"/>
</dbReference>
<dbReference type="PRINTS" id="PR01047">
    <property type="entry name" value="TRNASYNTHTHR"/>
</dbReference>
<dbReference type="SMART" id="SM00863">
    <property type="entry name" value="tRNA_SAD"/>
    <property type="match status" value="1"/>
</dbReference>
<dbReference type="SUPFAM" id="SSF52954">
    <property type="entry name" value="Class II aaRS ABD-related"/>
    <property type="match status" value="1"/>
</dbReference>
<dbReference type="SUPFAM" id="SSF55681">
    <property type="entry name" value="Class II aaRS and biotin synthetases"/>
    <property type="match status" value="1"/>
</dbReference>
<dbReference type="SUPFAM" id="SSF81271">
    <property type="entry name" value="TGS-like"/>
    <property type="match status" value="1"/>
</dbReference>
<dbReference type="SUPFAM" id="SSF55186">
    <property type="entry name" value="ThrRS/AlaRS common domain"/>
    <property type="match status" value="1"/>
</dbReference>
<dbReference type="PROSITE" id="PS50862">
    <property type="entry name" value="AA_TRNA_LIGASE_II"/>
    <property type="match status" value="1"/>
</dbReference>
<dbReference type="PROSITE" id="PS51880">
    <property type="entry name" value="TGS"/>
    <property type="match status" value="1"/>
</dbReference>
<comment type="function">
    <text evidence="1">Catalyzes the attachment of threonine to tRNA(Thr) in a two-step reaction: L-threonine is first activated by ATP to form Thr-AMP and then transferred to the acceptor end of tRNA(Thr). Also edits incorrectly charged L-seryl-tRNA(Thr).</text>
</comment>
<comment type="catalytic activity">
    <reaction evidence="1">
        <text>tRNA(Thr) + L-threonine + ATP = L-threonyl-tRNA(Thr) + AMP + diphosphate + H(+)</text>
        <dbReference type="Rhea" id="RHEA:24624"/>
        <dbReference type="Rhea" id="RHEA-COMP:9670"/>
        <dbReference type="Rhea" id="RHEA-COMP:9704"/>
        <dbReference type="ChEBI" id="CHEBI:15378"/>
        <dbReference type="ChEBI" id="CHEBI:30616"/>
        <dbReference type="ChEBI" id="CHEBI:33019"/>
        <dbReference type="ChEBI" id="CHEBI:57926"/>
        <dbReference type="ChEBI" id="CHEBI:78442"/>
        <dbReference type="ChEBI" id="CHEBI:78534"/>
        <dbReference type="ChEBI" id="CHEBI:456215"/>
        <dbReference type="EC" id="6.1.1.3"/>
    </reaction>
</comment>
<comment type="cofactor">
    <cofactor evidence="1">
        <name>Zn(2+)</name>
        <dbReference type="ChEBI" id="CHEBI:29105"/>
    </cofactor>
    <text evidence="1">Binds 1 zinc ion per subunit.</text>
</comment>
<comment type="subunit">
    <text evidence="1">Homodimer.</text>
</comment>
<comment type="subcellular location">
    <subcellularLocation>
        <location evidence="1">Cytoplasm</location>
    </subcellularLocation>
</comment>
<comment type="similarity">
    <text evidence="1">Belongs to the class-II aminoacyl-tRNA synthetase family.</text>
</comment>
<gene>
    <name evidence="1" type="primary">thrS</name>
    <name type="ordered locus">CJA_2530</name>
</gene>
<keyword id="KW-0030">Aminoacyl-tRNA synthetase</keyword>
<keyword id="KW-0067">ATP-binding</keyword>
<keyword id="KW-0963">Cytoplasm</keyword>
<keyword id="KW-0436">Ligase</keyword>
<keyword id="KW-0479">Metal-binding</keyword>
<keyword id="KW-0547">Nucleotide-binding</keyword>
<keyword id="KW-0648">Protein biosynthesis</keyword>
<keyword id="KW-1185">Reference proteome</keyword>
<keyword id="KW-0694">RNA-binding</keyword>
<keyword id="KW-0820">tRNA-binding</keyword>
<keyword id="KW-0862">Zinc</keyword>
<feature type="chain" id="PRO_1000098554" description="Threonine--tRNA ligase">
    <location>
        <begin position="1"/>
        <end position="642"/>
    </location>
</feature>
<feature type="domain" description="TGS" evidence="2">
    <location>
        <begin position="1"/>
        <end position="61"/>
    </location>
</feature>
<feature type="region of interest" description="Catalytic" evidence="1">
    <location>
        <begin position="243"/>
        <end position="534"/>
    </location>
</feature>
<feature type="binding site" evidence="1">
    <location>
        <position position="334"/>
    </location>
    <ligand>
        <name>Zn(2+)</name>
        <dbReference type="ChEBI" id="CHEBI:29105"/>
    </ligand>
</feature>
<feature type="binding site" evidence="1">
    <location>
        <position position="385"/>
    </location>
    <ligand>
        <name>Zn(2+)</name>
        <dbReference type="ChEBI" id="CHEBI:29105"/>
    </ligand>
</feature>
<feature type="binding site" evidence="1">
    <location>
        <position position="511"/>
    </location>
    <ligand>
        <name>Zn(2+)</name>
        <dbReference type="ChEBI" id="CHEBI:29105"/>
    </ligand>
</feature>
<name>SYT_CELJU</name>
<protein>
    <recommendedName>
        <fullName evidence="1">Threonine--tRNA ligase</fullName>
        <ecNumber evidence="1">6.1.1.3</ecNumber>
    </recommendedName>
    <alternativeName>
        <fullName evidence="1">Threonyl-tRNA synthetase</fullName>
        <shortName evidence="1">ThrRS</shortName>
    </alternativeName>
</protein>